<feature type="chain" id="PRO_0000212050" description="Universal stress protein B homolog">
    <location>
        <begin position="1"/>
        <end position="107"/>
    </location>
</feature>
<feature type="transmembrane region" description="Helical" evidence="1">
    <location>
        <begin position="6"/>
        <end position="25"/>
    </location>
</feature>
<feature type="transmembrane region" description="Helical" evidence="1">
    <location>
        <begin position="89"/>
        <end position="106"/>
    </location>
</feature>
<organism>
    <name type="scientific">Vibrio cholerae serotype O1 (strain ATCC 39315 / El Tor Inaba N16961)</name>
    <dbReference type="NCBI Taxonomy" id="243277"/>
    <lineage>
        <taxon>Bacteria</taxon>
        <taxon>Pseudomonadati</taxon>
        <taxon>Pseudomonadota</taxon>
        <taxon>Gammaproteobacteria</taxon>
        <taxon>Vibrionales</taxon>
        <taxon>Vibrionaceae</taxon>
        <taxon>Vibrio</taxon>
    </lineage>
</organism>
<sequence length="107" mass="12338">MISGDTILFALMLVTAINVARYVTALRSLIYIMREAHPLLYQQVDGRGFFTTHGNVTKQVRLYHYLKSREYHHHHDPVFTGKCDRVRELFILSGSLLVLTTVVAFML</sequence>
<gene>
    <name evidence="1" type="primary">uspB</name>
    <name type="ordered locus">VC_0079</name>
</gene>
<evidence type="ECO:0000255" key="1">
    <source>
        <dbReference type="HAMAP-Rule" id="MF_01088"/>
    </source>
</evidence>
<reference key="1">
    <citation type="journal article" date="2000" name="Nature">
        <title>DNA sequence of both chromosomes of the cholera pathogen Vibrio cholerae.</title>
        <authorList>
            <person name="Heidelberg J.F."/>
            <person name="Eisen J.A."/>
            <person name="Nelson W.C."/>
            <person name="Clayton R.A."/>
            <person name="Gwinn M.L."/>
            <person name="Dodson R.J."/>
            <person name="Haft D.H."/>
            <person name="Hickey E.K."/>
            <person name="Peterson J.D."/>
            <person name="Umayam L.A."/>
            <person name="Gill S.R."/>
            <person name="Nelson K.E."/>
            <person name="Read T.D."/>
            <person name="Tettelin H."/>
            <person name="Richardson D.L."/>
            <person name="Ermolaeva M.D."/>
            <person name="Vamathevan J.J."/>
            <person name="Bass S."/>
            <person name="Qin H."/>
            <person name="Dragoi I."/>
            <person name="Sellers P."/>
            <person name="McDonald L.A."/>
            <person name="Utterback T.R."/>
            <person name="Fleischmann R.D."/>
            <person name="Nierman W.C."/>
            <person name="White O."/>
            <person name="Salzberg S.L."/>
            <person name="Smith H.O."/>
            <person name="Colwell R.R."/>
            <person name="Mekalanos J.J."/>
            <person name="Venter J.C."/>
            <person name="Fraser C.M."/>
        </authorList>
    </citation>
    <scope>NUCLEOTIDE SEQUENCE [LARGE SCALE GENOMIC DNA]</scope>
    <source>
        <strain>ATCC 39315 / El Tor Inaba N16961</strain>
    </source>
</reference>
<protein>
    <recommendedName>
        <fullName evidence="1">Universal stress protein B homolog</fullName>
    </recommendedName>
</protein>
<name>USPB_VIBCH</name>
<accession>Q9KVR0</accession>
<keyword id="KW-0997">Cell inner membrane</keyword>
<keyword id="KW-1003">Cell membrane</keyword>
<keyword id="KW-0472">Membrane</keyword>
<keyword id="KW-1185">Reference proteome</keyword>
<keyword id="KW-0812">Transmembrane</keyword>
<keyword id="KW-1133">Transmembrane helix</keyword>
<comment type="subcellular location">
    <subcellularLocation>
        <location evidence="1">Cell inner membrane</location>
        <topology evidence="1">Multi-pass membrane protein</topology>
    </subcellularLocation>
</comment>
<comment type="similarity">
    <text evidence="1">Belongs to the universal stress protein B family.</text>
</comment>
<dbReference type="EMBL" id="AE003852">
    <property type="protein sequence ID" value="AAF93257.1"/>
    <property type="molecule type" value="Genomic_DNA"/>
</dbReference>
<dbReference type="PIR" id="H82365">
    <property type="entry name" value="H82365"/>
</dbReference>
<dbReference type="RefSeq" id="NP_229738.1">
    <property type="nucleotide sequence ID" value="NC_002505.1"/>
</dbReference>
<dbReference type="RefSeq" id="WP_000623073.1">
    <property type="nucleotide sequence ID" value="NZ_LT906614.1"/>
</dbReference>
<dbReference type="STRING" id="243277.VC_0079"/>
<dbReference type="DNASU" id="2614421"/>
<dbReference type="EnsemblBacteria" id="AAF93257">
    <property type="protein sequence ID" value="AAF93257"/>
    <property type="gene ID" value="VC_0079"/>
</dbReference>
<dbReference type="GeneID" id="89513162"/>
<dbReference type="KEGG" id="vch:VC_0079"/>
<dbReference type="PATRIC" id="fig|243277.26.peg.76"/>
<dbReference type="eggNOG" id="ENOG502ZP3V">
    <property type="taxonomic scope" value="Bacteria"/>
</dbReference>
<dbReference type="HOGENOM" id="CLU_151816_0_0_6"/>
<dbReference type="Proteomes" id="UP000000584">
    <property type="component" value="Chromosome 1"/>
</dbReference>
<dbReference type="GO" id="GO:0005886">
    <property type="term" value="C:plasma membrane"/>
    <property type="evidence" value="ECO:0007669"/>
    <property type="project" value="UniProtKB-SubCell"/>
</dbReference>
<dbReference type="HAMAP" id="MF_01088">
    <property type="entry name" value="UspB"/>
    <property type="match status" value="1"/>
</dbReference>
<dbReference type="InterPro" id="IPR019598">
    <property type="entry name" value="Universal_stress_protein_B"/>
</dbReference>
<dbReference type="NCBIfam" id="NF003435">
    <property type="entry name" value="PRK04960.1"/>
    <property type="match status" value="1"/>
</dbReference>
<dbReference type="Pfam" id="PF10625">
    <property type="entry name" value="UspB"/>
    <property type="match status" value="1"/>
</dbReference>
<proteinExistence type="inferred from homology"/>